<evidence type="ECO:0000255" key="1">
    <source>
        <dbReference type="PROSITE-ProRule" id="PRU00169"/>
    </source>
</evidence>
<evidence type="ECO:0000255" key="2">
    <source>
        <dbReference type="PROSITE-ProRule" id="PRU01091"/>
    </source>
</evidence>
<evidence type="ECO:0000305" key="3"/>
<keyword id="KW-0010">Activator</keyword>
<keyword id="KW-0104">Cadmium</keyword>
<keyword id="KW-0238">DNA-binding</keyword>
<keyword id="KW-0597">Phosphoprotein</keyword>
<keyword id="KW-0804">Transcription</keyword>
<keyword id="KW-0805">Transcription regulation</keyword>
<keyword id="KW-0902">Two-component regulatory system</keyword>
<keyword id="KW-0862">Zinc</keyword>
<reference key="1">
    <citation type="journal article" date="1997" name="Infect. Immun.">
        <title>Identification and characterization of a two-component regulatory system involved in invasion of eukaryotic cells and heavy-metal resistance in Burkholderia pseudomallei.</title>
        <authorList>
            <person name="Jones A.L."/>
            <person name="Deshazer D."/>
            <person name="Woods D.E."/>
        </authorList>
    </citation>
    <scope>NUCLEOTIDE SEQUENCE [GENOMIC DNA]</scope>
    <source>
        <strain>1026b</strain>
    </source>
</reference>
<reference key="2">
    <citation type="journal article" date="2012" name="PLoS ONE">
        <title>Evolution of Burkholderia pseudomallei in recurrent melioidosis.</title>
        <authorList>
            <person name="Hayden H.S."/>
            <person name="Lim R."/>
            <person name="Brittnacher M.J."/>
            <person name="Sims E.H."/>
            <person name="Ramage E.R."/>
            <person name="Fong C."/>
            <person name="Wu Z."/>
            <person name="Crist E."/>
            <person name="Chang J."/>
            <person name="Zhou Y."/>
            <person name="Radey M."/>
            <person name="Rohmer L."/>
            <person name="Haugen E."/>
            <person name="Gillett W."/>
            <person name="Wuthiekanun V."/>
            <person name="Peacock S.J."/>
            <person name="Kaul R."/>
            <person name="Miller S.I."/>
            <person name="Manoil C."/>
            <person name="Jacobs M.A."/>
        </authorList>
    </citation>
    <scope>NUCLEOTIDE SEQUENCE [LARGE SCALE GENOMIC DNA]</scope>
    <source>
        <strain>1026b</strain>
    </source>
</reference>
<name>IRLR_BURP2</name>
<gene>
    <name type="primary">irlR</name>
    <name type="ordered locus">BP1026B_II1139</name>
</gene>
<proteinExistence type="inferred from homology"/>
<protein>
    <recommendedName>
        <fullName>Transcriptional activator protein IrlR</fullName>
    </recommendedName>
</protein>
<comment type="function">
    <text>Member of the two-component regulatory system IrlR/IrlS. May be involved in invasion of eukaryotic cells and heavy-metal resistance.</text>
</comment>
<comment type="PTM">
    <text evidence="3">Phosphorylated by IrlS.</text>
</comment>
<dbReference type="EMBL" id="AF005358">
    <property type="protein sequence ID" value="AAB92482.1"/>
    <property type="molecule type" value="Genomic_DNA"/>
</dbReference>
<dbReference type="EMBL" id="CP002834">
    <property type="protein sequence ID" value="AFI69388.1"/>
    <property type="molecule type" value="Genomic_DNA"/>
</dbReference>
<dbReference type="RefSeq" id="WP_004197868.1">
    <property type="nucleotide sequence ID" value="NZ_CP004380.1"/>
</dbReference>
<dbReference type="SMR" id="I1WSZ4"/>
<dbReference type="GeneID" id="93063218"/>
<dbReference type="KEGG" id="bpz:BP1026B_II1139"/>
<dbReference type="PATRIC" id="fig|884204.3.peg.5416"/>
<dbReference type="Proteomes" id="UP000010087">
    <property type="component" value="Chromosome 2"/>
</dbReference>
<dbReference type="GO" id="GO:0005829">
    <property type="term" value="C:cytosol"/>
    <property type="evidence" value="ECO:0007669"/>
    <property type="project" value="TreeGrafter"/>
</dbReference>
<dbReference type="GO" id="GO:0032993">
    <property type="term" value="C:protein-DNA complex"/>
    <property type="evidence" value="ECO:0007669"/>
    <property type="project" value="TreeGrafter"/>
</dbReference>
<dbReference type="GO" id="GO:0000156">
    <property type="term" value="F:phosphorelay response regulator activity"/>
    <property type="evidence" value="ECO:0007669"/>
    <property type="project" value="TreeGrafter"/>
</dbReference>
<dbReference type="GO" id="GO:0000976">
    <property type="term" value="F:transcription cis-regulatory region binding"/>
    <property type="evidence" value="ECO:0007669"/>
    <property type="project" value="TreeGrafter"/>
</dbReference>
<dbReference type="GO" id="GO:0006355">
    <property type="term" value="P:regulation of DNA-templated transcription"/>
    <property type="evidence" value="ECO:0007669"/>
    <property type="project" value="InterPro"/>
</dbReference>
<dbReference type="CDD" id="cd19935">
    <property type="entry name" value="REC_OmpR_CusR-like"/>
    <property type="match status" value="1"/>
</dbReference>
<dbReference type="CDD" id="cd00383">
    <property type="entry name" value="trans_reg_C"/>
    <property type="match status" value="1"/>
</dbReference>
<dbReference type="FunFam" id="3.40.50.2300:FF:000001">
    <property type="entry name" value="DNA-binding response regulator PhoB"/>
    <property type="match status" value="1"/>
</dbReference>
<dbReference type="FunFam" id="1.10.10.10:FF:000005">
    <property type="entry name" value="Two-component system response regulator"/>
    <property type="match status" value="1"/>
</dbReference>
<dbReference type="Gene3D" id="3.40.50.2300">
    <property type="match status" value="1"/>
</dbReference>
<dbReference type="Gene3D" id="6.10.250.690">
    <property type="match status" value="1"/>
</dbReference>
<dbReference type="Gene3D" id="1.10.10.10">
    <property type="entry name" value="Winged helix-like DNA-binding domain superfamily/Winged helix DNA-binding domain"/>
    <property type="match status" value="1"/>
</dbReference>
<dbReference type="InterPro" id="IPR011006">
    <property type="entry name" value="CheY-like_superfamily"/>
</dbReference>
<dbReference type="InterPro" id="IPR006291">
    <property type="entry name" value="CusR-like"/>
</dbReference>
<dbReference type="InterPro" id="IPR001867">
    <property type="entry name" value="OmpR/PhoB-type_DNA-bd"/>
</dbReference>
<dbReference type="InterPro" id="IPR001789">
    <property type="entry name" value="Sig_transdc_resp-reg_receiver"/>
</dbReference>
<dbReference type="InterPro" id="IPR039420">
    <property type="entry name" value="WalR-like"/>
</dbReference>
<dbReference type="InterPro" id="IPR036388">
    <property type="entry name" value="WH-like_DNA-bd_sf"/>
</dbReference>
<dbReference type="NCBIfam" id="TIGR01387">
    <property type="entry name" value="cztR_silR_copR"/>
    <property type="match status" value="1"/>
</dbReference>
<dbReference type="PANTHER" id="PTHR48111">
    <property type="entry name" value="REGULATOR OF RPOS"/>
    <property type="match status" value="1"/>
</dbReference>
<dbReference type="PANTHER" id="PTHR48111:SF41">
    <property type="entry name" value="TRANSCRIPTIONAL REGULATORY PROTEIN CUSR-RELATED"/>
    <property type="match status" value="1"/>
</dbReference>
<dbReference type="Pfam" id="PF00072">
    <property type="entry name" value="Response_reg"/>
    <property type="match status" value="1"/>
</dbReference>
<dbReference type="Pfam" id="PF00486">
    <property type="entry name" value="Trans_reg_C"/>
    <property type="match status" value="1"/>
</dbReference>
<dbReference type="SMART" id="SM00448">
    <property type="entry name" value="REC"/>
    <property type="match status" value="1"/>
</dbReference>
<dbReference type="SMART" id="SM00862">
    <property type="entry name" value="Trans_reg_C"/>
    <property type="match status" value="1"/>
</dbReference>
<dbReference type="SUPFAM" id="SSF52172">
    <property type="entry name" value="CheY-like"/>
    <property type="match status" value="1"/>
</dbReference>
<dbReference type="PROSITE" id="PS51755">
    <property type="entry name" value="OMPR_PHOB"/>
    <property type="match status" value="1"/>
</dbReference>
<dbReference type="PROSITE" id="PS50110">
    <property type="entry name" value="RESPONSE_REGULATORY"/>
    <property type="match status" value="1"/>
</dbReference>
<organism>
    <name type="scientific">Burkholderia pseudomallei (strain 1026b)</name>
    <dbReference type="NCBI Taxonomy" id="884204"/>
    <lineage>
        <taxon>Bacteria</taxon>
        <taxon>Pseudomonadati</taxon>
        <taxon>Pseudomonadota</taxon>
        <taxon>Betaproteobacteria</taxon>
        <taxon>Burkholderiales</taxon>
        <taxon>Burkholderiaceae</taxon>
        <taxon>Burkholderia</taxon>
        <taxon>pseudomallei group</taxon>
    </lineage>
</organism>
<accession>I1WSZ4</accession>
<accession>O31395</accession>
<accession>Q63LH5</accession>
<sequence>MRILIVEDEPKTGMYLRKGLTEAGFIADWVEDGVTGLHQAETEEYDLIILDVMLPGHDGWTVLERLRRAHSTPVLFLTARDDVGDRVKGLELGADDYVVKPFDFVELVARVRSILRRGQARESTVLRIADLELDLTRRKATRQGDVVLLTAKEFALLWLLMRREGEILPRATIASQVWDMNFNSDTNVVDAAIRRLRSKIDDAYEPKLIHTVRGMGYVLEVRSASAPSR</sequence>
<feature type="chain" id="PRO_0000429790" description="Transcriptional activator protein IrlR">
    <location>
        <begin position="1"/>
        <end position="229"/>
    </location>
</feature>
<feature type="domain" description="Response regulatory" evidence="1">
    <location>
        <begin position="2"/>
        <end position="115"/>
    </location>
</feature>
<feature type="DNA-binding region" description="OmpR/PhoB-type" evidence="2">
    <location>
        <begin position="123"/>
        <end position="221"/>
    </location>
</feature>
<feature type="modified residue" description="4-aspartylphosphate" evidence="1">
    <location>
        <position position="51"/>
    </location>
</feature>
<feature type="sequence conflict" description="In Ref. 1; AAB92482." evidence="3" ref="1">
    <original>L</original>
    <variation>V</variation>
    <location>
        <position position="16"/>
    </location>
</feature>